<feature type="chain" id="PRO_0000188651" description="Glycogen synthase">
    <location>
        <begin position="1"/>
        <end position="474"/>
    </location>
</feature>
<feature type="binding site" evidence="1">
    <location>
        <position position="15"/>
    </location>
    <ligand>
        <name>ADP-alpha-D-glucose</name>
        <dbReference type="ChEBI" id="CHEBI:57498"/>
    </ligand>
</feature>
<gene>
    <name evidence="1" type="primary">glgA</name>
    <name type="ordered locus">tll0763</name>
</gene>
<protein>
    <recommendedName>
        <fullName evidence="1">Glycogen synthase</fullName>
        <ecNumber evidence="1">2.4.1.21</ecNumber>
    </recommendedName>
    <alternativeName>
        <fullName evidence="1">Starch [bacterial glycogen] synthase</fullName>
    </alternativeName>
</protein>
<proteinExistence type="inferred from homology"/>
<name>GLGA_THEVB</name>
<comment type="function">
    <text evidence="1">Synthesizes alpha-1,4-glucan chains using ADP-glucose.</text>
</comment>
<comment type="catalytic activity">
    <reaction evidence="1">
        <text>[(1-&gt;4)-alpha-D-glucosyl](n) + ADP-alpha-D-glucose = [(1-&gt;4)-alpha-D-glucosyl](n+1) + ADP + H(+)</text>
        <dbReference type="Rhea" id="RHEA:18189"/>
        <dbReference type="Rhea" id="RHEA-COMP:9584"/>
        <dbReference type="Rhea" id="RHEA-COMP:9587"/>
        <dbReference type="ChEBI" id="CHEBI:15378"/>
        <dbReference type="ChEBI" id="CHEBI:15444"/>
        <dbReference type="ChEBI" id="CHEBI:57498"/>
        <dbReference type="ChEBI" id="CHEBI:456216"/>
        <dbReference type="EC" id="2.4.1.21"/>
    </reaction>
</comment>
<comment type="pathway">
    <text evidence="1">Glycan biosynthesis; glycogen biosynthesis.</text>
</comment>
<comment type="similarity">
    <text evidence="1">Belongs to the glycosyltransferase 1 family. Bacterial/plant glycogen synthase subfamily.</text>
</comment>
<dbReference type="EC" id="2.4.1.21" evidence="1"/>
<dbReference type="EMBL" id="BA000039">
    <property type="protein sequence ID" value="BAC08314.1"/>
    <property type="molecule type" value="Genomic_DNA"/>
</dbReference>
<dbReference type="RefSeq" id="NP_681552.1">
    <property type="nucleotide sequence ID" value="NC_004113.1"/>
</dbReference>
<dbReference type="RefSeq" id="WP_011056608.1">
    <property type="nucleotide sequence ID" value="NC_004113.1"/>
</dbReference>
<dbReference type="SMR" id="Q8DKU2"/>
<dbReference type="STRING" id="197221.gene:10747354"/>
<dbReference type="CAZy" id="GT5">
    <property type="family name" value="Glycosyltransferase Family 5"/>
</dbReference>
<dbReference type="EnsemblBacteria" id="BAC08314">
    <property type="protein sequence ID" value="BAC08314"/>
    <property type="gene ID" value="BAC08314"/>
</dbReference>
<dbReference type="KEGG" id="tel:tll0763"/>
<dbReference type="PATRIC" id="fig|197221.4.peg.802"/>
<dbReference type="eggNOG" id="COG0297">
    <property type="taxonomic scope" value="Bacteria"/>
</dbReference>
<dbReference type="UniPathway" id="UPA00164"/>
<dbReference type="Proteomes" id="UP000000440">
    <property type="component" value="Chromosome"/>
</dbReference>
<dbReference type="GO" id="GO:0009011">
    <property type="term" value="F:alpha-1,4-glucan glucosyltransferase (ADP-glucose donor) activity"/>
    <property type="evidence" value="ECO:0007669"/>
    <property type="project" value="UniProtKB-UniRule"/>
</dbReference>
<dbReference type="GO" id="GO:0004373">
    <property type="term" value="F:alpha-1,4-glucan glucosyltransferase (UDP-glucose donor) activity"/>
    <property type="evidence" value="ECO:0007669"/>
    <property type="project" value="InterPro"/>
</dbReference>
<dbReference type="GO" id="GO:0005978">
    <property type="term" value="P:glycogen biosynthetic process"/>
    <property type="evidence" value="ECO:0007669"/>
    <property type="project" value="UniProtKB-UniRule"/>
</dbReference>
<dbReference type="CDD" id="cd03791">
    <property type="entry name" value="GT5_Glycogen_synthase_DULL1-like"/>
    <property type="match status" value="1"/>
</dbReference>
<dbReference type="Gene3D" id="3.40.50.2000">
    <property type="entry name" value="Glycogen Phosphorylase B"/>
    <property type="match status" value="2"/>
</dbReference>
<dbReference type="HAMAP" id="MF_00484">
    <property type="entry name" value="Glycogen_synth"/>
    <property type="match status" value="1"/>
</dbReference>
<dbReference type="InterPro" id="IPR001296">
    <property type="entry name" value="Glyco_trans_1"/>
</dbReference>
<dbReference type="InterPro" id="IPR011835">
    <property type="entry name" value="GS/SS"/>
</dbReference>
<dbReference type="InterPro" id="IPR013534">
    <property type="entry name" value="Starch_synth_cat_dom"/>
</dbReference>
<dbReference type="NCBIfam" id="TIGR02095">
    <property type="entry name" value="glgA"/>
    <property type="match status" value="1"/>
</dbReference>
<dbReference type="NCBIfam" id="NF001900">
    <property type="entry name" value="PRK00654.1-3"/>
    <property type="match status" value="1"/>
</dbReference>
<dbReference type="PANTHER" id="PTHR45825:SF11">
    <property type="entry name" value="ALPHA AMYLASE DOMAIN-CONTAINING PROTEIN"/>
    <property type="match status" value="1"/>
</dbReference>
<dbReference type="PANTHER" id="PTHR45825">
    <property type="entry name" value="GRANULE-BOUND STARCH SYNTHASE 1, CHLOROPLASTIC/AMYLOPLASTIC"/>
    <property type="match status" value="1"/>
</dbReference>
<dbReference type="Pfam" id="PF08323">
    <property type="entry name" value="Glyco_transf_5"/>
    <property type="match status" value="1"/>
</dbReference>
<dbReference type="Pfam" id="PF00534">
    <property type="entry name" value="Glycos_transf_1"/>
    <property type="match status" value="1"/>
</dbReference>
<dbReference type="SUPFAM" id="SSF53756">
    <property type="entry name" value="UDP-Glycosyltransferase/glycogen phosphorylase"/>
    <property type="match status" value="1"/>
</dbReference>
<sequence>MRILFVAAEAAPLAKVGGMGDVVGSLPKVLRRMGHDVRIFMPYYGFLPDKVEIPKDPIWIGHAMFQTFHVYETVLPGSDVPLYLFGHPCFNPRRIYYGEDEDWRFTFFANGAAEFAWNYWKPQIIHCHDWHTGMIPVWMHQDPDITTVFTIHNLAYQGPWRWRLEQITWCPWYMQGHNTMAAALQYADRVNTVSPTYAEQIKTPEYGEKLEGLLSFISGKLSGILNGIDTELFDPSSDRALAQNYTADTLERRRANKIALQEELGLEVNSGAFLVGMVSRLVEQKGLDLLIQILDRFLAYTDSQFVLLGTGDRYYETQMWQIASRFPGRCSVQLLYSDVLSRRIYGGADAFIMPSRFEPCGISQMIALRYGCVPIVRRTGGLVDTVSHHNPEQQTGTGYCFDRYEPLDFYTCLVRAWEGYRYKREWHALQQRGMREDFSWTKSALAYNALYNSIYGLPPETMPNPSPTLVPAVT</sequence>
<organism>
    <name type="scientific">Thermosynechococcus vestitus (strain NIES-2133 / IAM M-273 / BP-1)</name>
    <dbReference type="NCBI Taxonomy" id="197221"/>
    <lineage>
        <taxon>Bacteria</taxon>
        <taxon>Bacillati</taxon>
        <taxon>Cyanobacteriota</taxon>
        <taxon>Cyanophyceae</taxon>
        <taxon>Acaryochloridales</taxon>
        <taxon>Thermosynechococcaceae</taxon>
        <taxon>Thermosynechococcus</taxon>
    </lineage>
</organism>
<reference key="1">
    <citation type="journal article" date="2002" name="DNA Res.">
        <title>Complete genome structure of the thermophilic cyanobacterium Thermosynechococcus elongatus BP-1.</title>
        <authorList>
            <person name="Nakamura Y."/>
            <person name="Kaneko T."/>
            <person name="Sato S."/>
            <person name="Ikeuchi M."/>
            <person name="Katoh H."/>
            <person name="Sasamoto S."/>
            <person name="Watanabe A."/>
            <person name="Iriguchi M."/>
            <person name="Kawashima K."/>
            <person name="Kimura T."/>
            <person name="Kishida Y."/>
            <person name="Kiyokawa C."/>
            <person name="Kohara M."/>
            <person name="Matsumoto M."/>
            <person name="Matsuno A."/>
            <person name="Nakazaki N."/>
            <person name="Shimpo S."/>
            <person name="Sugimoto M."/>
            <person name="Takeuchi C."/>
            <person name="Yamada M."/>
            <person name="Tabata S."/>
        </authorList>
    </citation>
    <scope>NUCLEOTIDE SEQUENCE [LARGE SCALE GENOMIC DNA]</scope>
    <source>
        <strain>NIES-2133 / IAM M-273 / BP-1</strain>
    </source>
</reference>
<evidence type="ECO:0000255" key="1">
    <source>
        <dbReference type="HAMAP-Rule" id="MF_00484"/>
    </source>
</evidence>
<accession>Q8DKU2</accession>
<keyword id="KW-0320">Glycogen biosynthesis</keyword>
<keyword id="KW-0328">Glycosyltransferase</keyword>
<keyword id="KW-1185">Reference proteome</keyword>
<keyword id="KW-0808">Transferase</keyword>